<name>PSIP1_FELCA</name>
<protein>
    <recommendedName>
        <fullName>PC4 and SFRS1-interacting protein</fullName>
    </recommendedName>
    <alternativeName>
        <fullName>LEDGF/p75</fullName>
    </alternativeName>
    <alternativeName>
        <fullName>Lens epithelium-derived growth factor</fullName>
    </alternativeName>
    <alternativeName>
        <fullName>Transcription coactivator p75</fullName>
    </alternativeName>
</protein>
<keyword id="KW-0164">Citrullination</keyword>
<keyword id="KW-0175">Coiled coil</keyword>
<keyword id="KW-0238">DNA-binding</keyword>
<keyword id="KW-1017">Isopeptide bond</keyword>
<keyword id="KW-0539">Nucleus</keyword>
<keyword id="KW-0597">Phosphoprotein</keyword>
<keyword id="KW-1185">Reference proteome</keyword>
<keyword id="KW-0804">Transcription</keyword>
<keyword id="KW-0805">Transcription regulation</keyword>
<keyword id="KW-0832">Ubl conjugation</keyword>
<gene>
    <name type="primary">PSIP1</name>
    <name type="synonym">LEDGF</name>
</gene>
<organism>
    <name type="scientific">Felis catus</name>
    <name type="common">Cat</name>
    <name type="synonym">Felis silvestris catus</name>
    <dbReference type="NCBI Taxonomy" id="9685"/>
    <lineage>
        <taxon>Eukaryota</taxon>
        <taxon>Metazoa</taxon>
        <taxon>Chordata</taxon>
        <taxon>Craniata</taxon>
        <taxon>Vertebrata</taxon>
        <taxon>Euteleostomi</taxon>
        <taxon>Mammalia</taxon>
        <taxon>Eutheria</taxon>
        <taxon>Laurasiatheria</taxon>
        <taxon>Carnivora</taxon>
        <taxon>Feliformia</taxon>
        <taxon>Felidae</taxon>
        <taxon>Felinae</taxon>
        <taxon>Felis</taxon>
    </lineage>
</organism>
<dbReference type="EMBL" id="AY705213">
    <property type="protein sequence ID" value="AAU10509.1"/>
    <property type="molecule type" value="mRNA"/>
</dbReference>
<dbReference type="RefSeq" id="NP_001009372.1">
    <property type="nucleotide sequence ID" value="NM_001009372.1"/>
</dbReference>
<dbReference type="RefSeq" id="XP_023097965.1">
    <property type="nucleotide sequence ID" value="XM_023242197.2"/>
</dbReference>
<dbReference type="BMRB" id="Q66T72"/>
<dbReference type="SMR" id="Q66T72"/>
<dbReference type="STRING" id="9685.ENSFCAP00000020694"/>
<dbReference type="PaxDb" id="9685-ENSFCAP00000024054"/>
<dbReference type="Ensembl" id="ENSFCAT00000026779.4">
    <property type="protein sequence ID" value="ENSFCAP00000020694.1"/>
    <property type="gene ID" value="ENSFCAG00000028662.4"/>
</dbReference>
<dbReference type="GeneID" id="493969"/>
<dbReference type="KEGG" id="fca:493969"/>
<dbReference type="CTD" id="11168"/>
<dbReference type="VGNC" id="VGNC:69103">
    <property type="gene designation" value="PSIP1"/>
</dbReference>
<dbReference type="eggNOG" id="KOG1904">
    <property type="taxonomic scope" value="Eukaryota"/>
</dbReference>
<dbReference type="GeneTree" id="ENSGT00940000154706"/>
<dbReference type="InParanoid" id="Q66T72"/>
<dbReference type="OMA" id="HKKFFAG"/>
<dbReference type="OrthoDB" id="62853at2759"/>
<dbReference type="Proteomes" id="UP000011712">
    <property type="component" value="Chromosome D4"/>
</dbReference>
<dbReference type="Bgee" id="ENSFCAG00000028662">
    <property type="expression patterns" value="Expressed in embryonic head and 9 other cell types or tissues"/>
</dbReference>
<dbReference type="GO" id="GO:0000791">
    <property type="term" value="C:euchromatin"/>
    <property type="evidence" value="ECO:0000250"/>
    <property type="project" value="UniProtKB"/>
</dbReference>
<dbReference type="GO" id="GO:0000792">
    <property type="term" value="C:heterochromatin"/>
    <property type="evidence" value="ECO:0000250"/>
    <property type="project" value="UniProtKB"/>
</dbReference>
<dbReference type="GO" id="GO:0005634">
    <property type="term" value="C:nucleus"/>
    <property type="evidence" value="ECO:0000318"/>
    <property type="project" value="GO_Central"/>
</dbReference>
<dbReference type="GO" id="GO:0003682">
    <property type="term" value="F:chromatin binding"/>
    <property type="evidence" value="ECO:0000250"/>
    <property type="project" value="UniProtKB"/>
</dbReference>
<dbReference type="GO" id="GO:0140297">
    <property type="term" value="F:DNA-binding transcription factor binding"/>
    <property type="evidence" value="ECO:0000250"/>
    <property type="project" value="UniProtKB"/>
</dbReference>
<dbReference type="GO" id="GO:0097100">
    <property type="term" value="F:supercoiled DNA binding"/>
    <property type="evidence" value="ECO:0000250"/>
    <property type="project" value="UniProtKB"/>
</dbReference>
<dbReference type="GO" id="GO:0003713">
    <property type="term" value="F:transcription coactivator activity"/>
    <property type="evidence" value="ECO:0000250"/>
    <property type="project" value="UniProtKB"/>
</dbReference>
<dbReference type="GO" id="GO:0006338">
    <property type="term" value="P:chromatin remodeling"/>
    <property type="evidence" value="ECO:0000318"/>
    <property type="project" value="GO_Central"/>
</dbReference>
<dbReference type="GO" id="GO:0000395">
    <property type="term" value="P:mRNA 5'-splice site recognition"/>
    <property type="evidence" value="ECO:0000250"/>
    <property type="project" value="UniProtKB"/>
</dbReference>
<dbReference type="GO" id="GO:0045944">
    <property type="term" value="P:positive regulation of transcription by RNA polymerase II"/>
    <property type="evidence" value="ECO:0000250"/>
    <property type="project" value="UniProtKB"/>
</dbReference>
<dbReference type="GO" id="GO:0009408">
    <property type="term" value="P:response to heat"/>
    <property type="evidence" value="ECO:0000250"/>
    <property type="project" value="UniProtKB"/>
</dbReference>
<dbReference type="GO" id="GO:0006979">
    <property type="term" value="P:response to oxidative stress"/>
    <property type="evidence" value="ECO:0000250"/>
    <property type="project" value="UniProtKB"/>
</dbReference>
<dbReference type="CDD" id="cd20151">
    <property type="entry name" value="PWWP_PSIP"/>
    <property type="match status" value="1"/>
</dbReference>
<dbReference type="FunFam" id="2.30.30.140:FF:000017">
    <property type="entry name" value="hepatoma-derived growth factor isoform X1"/>
    <property type="match status" value="1"/>
</dbReference>
<dbReference type="FunFam" id="1.20.930.10:FF:000005">
    <property type="entry name" value="PC4 and SFRS1-interacting protein-like isoform X1"/>
    <property type="match status" value="1"/>
</dbReference>
<dbReference type="Gene3D" id="2.30.30.140">
    <property type="match status" value="1"/>
</dbReference>
<dbReference type="Gene3D" id="1.20.930.10">
    <property type="entry name" value="Conserved domain common to transcription factors TFIIS, elongin A, CRSP70"/>
    <property type="match status" value="1"/>
</dbReference>
<dbReference type="InterPro" id="IPR036218">
    <property type="entry name" value="HIVI-bd_sf"/>
</dbReference>
<dbReference type="InterPro" id="IPR021567">
    <property type="entry name" value="LEDGF_IBD"/>
</dbReference>
<dbReference type="InterPro" id="IPR000313">
    <property type="entry name" value="PWWP_dom"/>
</dbReference>
<dbReference type="InterPro" id="IPR035441">
    <property type="entry name" value="TFIIS/LEDGF_dom_sf"/>
</dbReference>
<dbReference type="PANTHER" id="PTHR12550">
    <property type="entry name" value="HEPATOMA-DERIVED GROWTH FACTOR-RELATED"/>
    <property type="match status" value="1"/>
</dbReference>
<dbReference type="PANTHER" id="PTHR12550:SF42">
    <property type="entry name" value="PC4 AND SFRS1-INTERACTING PROTEIN"/>
    <property type="match status" value="1"/>
</dbReference>
<dbReference type="Pfam" id="PF11467">
    <property type="entry name" value="LEDGF"/>
    <property type="match status" value="1"/>
</dbReference>
<dbReference type="Pfam" id="PF00855">
    <property type="entry name" value="PWWP"/>
    <property type="match status" value="1"/>
</dbReference>
<dbReference type="PRINTS" id="PR01503">
    <property type="entry name" value="TREACLE"/>
</dbReference>
<dbReference type="SMART" id="SM00293">
    <property type="entry name" value="PWWP"/>
    <property type="match status" value="1"/>
</dbReference>
<dbReference type="SUPFAM" id="SSF140576">
    <property type="entry name" value="HIV integrase-binding domain"/>
    <property type="match status" value="1"/>
</dbReference>
<dbReference type="SUPFAM" id="SSF63748">
    <property type="entry name" value="Tudor/PWWP/MBT"/>
    <property type="match status" value="1"/>
</dbReference>
<dbReference type="PROSITE" id="PS50812">
    <property type="entry name" value="PWWP"/>
    <property type="match status" value="1"/>
</dbReference>
<reference key="1">
    <citation type="journal article" date="2005" name="J. Cell Sci.">
        <title>Identification of the LEDGF/p75 HIV-1 integrase-interaction domain and NLS reveals NLS-independent chromatin tethering.</title>
        <authorList>
            <person name="Vanegas M."/>
            <person name="Llano M."/>
            <person name="Delgado S."/>
            <person name="Thompson D."/>
            <person name="Peretz M."/>
            <person name="Poeschla E.M."/>
        </authorList>
    </citation>
    <scope>NUCLEOTIDE SEQUENCE [MRNA]</scope>
    <scope>INTERACTION WITH FIV INTEGRASE</scope>
    <scope>DOMAIN IBD</scope>
</reference>
<comment type="function">
    <text evidence="2">Transcriptional coactivator involved in neuroepithelial stem cell differentiation and neurogenesis. Involved in particular in lens epithelial cell gene regulation and stress responses. May play an important role in lens epithelial to fiber cell terminal differentiation. May play a protective role during stress-induced apoptosis (By similarity).</text>
</comment>
<comment type="subunit">
    <text evidence="2">Monomer (By similarity). Interacts with IFRD1/PC4 (By similarity). Interacts (via IBD domain) with POGZ (via IBM motif) and CDCA7L (via IBM motifs) (By similarity). Interacts (via IBD domain) with KMT2A (via IBM motifs) with a moderate affinity whereas interacts with the KMT2A-MEN1 complex with a greater affinity; MEN1 enhances interaction of KMT2A with PSIP1 (By similarity). Interacts (via IBD domain) with IWS1 (via IBM motif), MED1 (via IBM motif) and DBF4 (via IBM motifs) (By similarity).</text>
</comment>
<comment type="subunit">
    <text evidence="8">(Microbial infection) Interacts (via IBD domain) with feline immunodeficiency virus (FIV) integrase (IN), determining its nuclear localization, its tight association with chromatin and its protection from the proteasome.</text>
</comment>
<comment type="subcellular location">
    <subcellularLocation>
        <location evidence="2">Nucleus</location>
    </subcellularLocation>
</comment>
<comment type="PTM">
    <text evidence="4">Citrullinated by PADI4.</text>
</comment>
<comment type="similarity">
    <text evidence="9">Belongs to the HDGF family.</text>
</comment>
<proteinExistence type="evidence at protein level"/>
<feature type="chain" id="PRO_0000191707" description="PC4 and SFRS1-interacting protein">
    <location>
        <begin position="1"/>
        <end position="530"/>
    </location>
</feature>
<feature type="domain" description="PWWP" evidence="6">
    <location>
        <begin position="1"/>
        <end position="64"/>
    </location>
</feature>
<feature type="region of interest" description="Disordered" evidence="7">
    <location>
        <begin position="86"/>
        <end position="349"/>
    </location>
</feature>
<feature type="region of interest" description="Integrase-binding domain (IBD)" evidence="8">
    <location>
        <begin position="340"/>
        <end position="417"/>
    </location>
</feature>
<feature type="region of interest" description="Disordered" evidence="7">
    <location>
        <begin position="446"/>
        <end position="530"/>
    </location>
</feature>
<feature type="coiled-coil region" evidence="5">
    <location>
        <begin position="306"/>
        <end position="334"/>
    </location>
</feature>
<feature type="coiled-coil region" evidence="5">
    <location>
        <begin position="371"/>
        <end position="395"/>
    </location>
</feature>
<feature type="short sequence motif" description="Nuclear localization signal" evidence="2">
    <location>
        <begin position="146"/>
        <end position="156"/>
    </location>
</feature>
<feature type="compositionally biased region" description="Polar residues" evidence="7">
    <location>
        <begin position="92"/>
        <end position="104"/>
    </location>
</feature>
<feature type="compositionally biased region" description="Basic and acidic residues" evidence="7">
    <location>
        <begin position="113"/>
        <end position="135"/>
    </location>
</feature>
<feature type="compositionally biased region" description="Basic residues" evidence="7">
    <location>
        <begin position="144"/>
        <end position="153"/>
    </location>
</feature>
<feature type="compositionally biased region" description="Basic and acidic residues" evidence="7">
    <location>
        <begin position="213"/>
        <end position="261"/>
    </location>
</feature>
<feature type="compositionally biased region" description="Acidic residues" evidence="7">
    <location>
        <begin position="274"/>
        <end position="283"/>
    </location>
</feature>
<feature type="compositionally biased region" description="Basic residues" evidence="7">
    <location>
        <begin position="287"/>
        <end position="302"/>
    </location>
</feature>
<feature type="compositionally biased region" description="Basic and acidic residues" evidence="7">
    <location>
        <begin position="305"/>
        <end position="349"/>
    </location>
</feature>
<feature type="compositionally biased region" description="Basic and acidic residues" evidence="7">
    <location>
        <begin position="446"/>
        <end position="473"/>
    </location>
</feature>
<feature type="compositionally biased region" description="Polar residues" evidence="7">
    <location>
        <begin position="474"/>
        <end position="494"/>
    </location>
</feature>
<feature type="compositionally biased region" description="Basic and acidic residues" evidence="7">
    <location>
        <begin position="498"/>
        <end position="530"/>
    </location>
</feature>
<feature type="modified residue" description="Phosphoserine" evidence="3">
    <location>
        <position position="102"/>
    </location>
</feature>
<feature type="modified residue" description="Phosphoserine" evidence="4">
    <location>
        <position position="105"/>
    </location>
</feature>
<feature type="modified residue" description="Phosphoserine" evidence="2">
    <location>
        <position position="106"/>
    </location>
</feature>
<feature type="modified residue" description="Phosphothreonine" evidence="4">
    <location>
        <position position="115"/>
    </location>
</feature>
<feature type="modified residue" description="Phosphothreonine" evidence="2">
    <location>
        <position position="122"/>
    </location>
</feature>
<feature type="modified residue" description="Phosphoserine" evidence="2">
    <location>
        <position position="129"/>
    </location>
</feature>
<feature type="modified residue" description="Phosphothreonine" evidence="2">
    <location>
        <position position="141"/>
    </location>
</feature>
<feature type="modified residue" description="Phosphothreonine" evidence="2">
    <location>
        <position position="167"/>
    </location>
</feature>
<feature type="modified residue" description="Phosphoserine" evidence="2">
    <location>
        <position position="177"/>
    </location>
</feature>
<feature type="modified residue" description="Phosphoserine" evidence="2">
    <location>
        <position position="206"/>
    </location>
</feature>
<feature type="modified residue" description="Phosphoserine" evidence="2">
    <location>
        <position position="271"/>
    </location>
</feature>
<feature type="modified residue" description="Phosphothreonine" evidence="2">
    <location>
        <position position="272"/>
    </location>
</feature>
<feature type="modified residue" description="Phosphoserine" evidence="2">
    <location>
        <position position="273"/>
    </location>
</feature>
<feature type="modified residue" description="Phosphoserine" evidence="2">
    <location>
        <position position="275"/>
    </location>
</feature>
<feature type="modified residue" description="Phosphoserine" evidence="2">
    <location>
        <position position="434"/>
    </location>
</feature>
<feature type="modified residue" description="Phosphothreonine" evidence="2">
    <location>
        <position position="437"/>
    </location>
</feature>
<feature type="modified residue" description="Phosphoserine" evidence="2">
    <location>
        <position position="443"/>
    </location>
</feature>
<feature type="modified residue" description="Citrulline" evidence="1">
    <location>
        <position position="517"/>
    </location>
</feature>
<feature type="modified residue" description="Phosphoserine" evidence="2">
    <location>
        <position position="522"/>
    </location>
</feature>
<feature type="modified residue" description="Phosphothreonine" evidence="2">
    <location>
        <position position="527"/>
    </location>
</feature>
<feature type="cross-link" description="Glycyl lysine isopeptide (Lys-Gly) (interchain with G-Cter in SUMO2)" evidence="2">
    <location>
        <position position="75"/>
    </location>
</feature>
<evidence type="ECO:0000250" key="1"/>
<evidence type="ECO:0000250" key="2">
    <source>
        <dbReference type="UniProtKB" id="O75475"/>
    </source>
</evidence>
<evidence type="ECO:0000250" key="3">
    <source>
        <dbReference type="UniProtKB" id="Q812D1"/>
    </source>
</evidence>
<evidence type="ECO:0000250" key="4">
    <source>
        <dbReference type="UniProtKB" id="Q99JF8"/>
    </source>
</evidence>
<evidence type="ECO:0000255" key="5"/>
<evidence type="ECO:0000255" key="6">
    <source>
        <dbReference type="PROSITE-ProRule" id="PRU00162"/>
    </source>
</evidence>
<evidence type="ECO:0000256" key="7">
    <source>
        <dbReference type="SAM" id="MobiDB-lite"/>
    </source>
</evidence>
<evidence type="ECO:0000269" key="8">
    <source>
    </source>
</evidence>
<evidence type="ECO:0000305" key="9"/>
<sequence length="530" mass="60100">MTRDFKPGDLIFAKMKGYPHWPARVDEVPDGAVKPPTNKLPIFFFGTHETAFLGPKDIFPYSENKEKYGKPNKRKGFNEGLWEIDNNPKVKFSSQQASTKQSNASSDVEVEEKETSVSKEDTDHEEKASNEDVTKAIDITTPKAARRGRKRKAEKQVETEEAGVVTTAAASVNLKVSPKRGRPAATEVKIPKPRGRPKMVKQPCPSESDMVTEEDKSKKKGQEEKQPKKQLKKDEEGQKEEDKPRKEPDKKEGKKEVESKRKNSAKTGVTSTSDSEEEGDDQESEKKRKGGRNFQTAHRRNMLKGQHEKEAADRKRKQEEQMETEQQNKDEGKKPEVKKVEKKRETSMDSRLQRIHAEIKNSLKIDNLDVNRCIEALDELASLQVTMQQAQKHTEMITTLKKIRRFKVSQIIMEKSTMLYNKFKNMFLVGEGDSVITQVLNKSLAEQRQHEEANKTKDQGKKGPNKKLDKEQTGSKTLNGGSDAPDSNQAQHNGDSSEESKDKHEASSKKKPSNEERETEISLKDSTLDN</sequence>
<accession>Q66T72</accession>